<keyword id="KW-0687">Ribonucleoprotein</keyword>
<keyword id="KW-0689">Ribosomal protein</keyword>
<gene>
    <name evidence="1" type="primary">rplS</name>
    <name type="ordered locus">BCE33L3599</name>
</gene>
<dbReference type="EMBL" id="CP000001">
    <property type="protein sequence ID" value="AAU16668.1"/>
    <property type="molecule type" value="Genomic_DNA"/>
</dbReference>
<dbReference type="RefSeq" id="WP_001186516.1">
    <property type="nucleotide sequence ID" value="NZ_CP009968.1"/>
</dbReference>
<dbReference type="SMR" id="Q636I6"/>
<dbReference type="GeneID" id="93007272"/>
<dbReference type="KEGG" id="bcz:BCE33L3599"/>
<dbReference type="PATRIC" id="fig|288681.22.peg.1812"/>
<dbReference type="Proteomes" id="UP000002612">
    <property type="component" value="Chromosome"/>
</dbReference>
<dbReference type="GO" id="GO:0022625">
    <property type="term" value="C:cytosolic large ribosomal subunit"/>
    <property type="evidence" value="ECO:0007669"/>
    <property type="project" value="TreeGrafter"/>
</dbReference>
<dbReference type="GO" id="GO:0003735">
    <property type="term" value="F:structural constituent of ribosome"/>
    <property type="evidence" value="ECO:0007669"/>
    <property type="project" value="InterPro"/>
</dbReference>
<dbReference type="GO" id="GO:0006412">
    <property type="term" value="P:translation"/>
    <property type="evidence" value="ECO:0007669"/>
    <property type="project" value="UniProtKB-UniRule"/>
</dbReference>
<dbReference type="FunFam" id="2.30.30.790:FF:000001">
    <property type="entry name" value="50S ribosomal protein L19"/>
    <property type="match status" value="1"/>
</dbReference>
<dbReference type="Gene3D" id="2.30.30.790">
    <property type="match status" value="1"/>
</dbReference>
<dbReference type="HAMAP" id="MF_00402">
    <property type="entry name" value="Ribosomal_bL19"/>
    <property type="match status" value="1"/>
</dbReference>
<dbReference type="InterPro" id="IPR001857">
    <property type="entry name" value="Ribosomal_bL19"/>
</dbReference>
<dbReference type="InterPro" id="IPR018257">
    <property type="entry name" value="Ribosomal_bL19_CS"/>
</dbReference>
<dbReference type="InterPro" id="IPR038657">
    <property type="entry name" value="Ribosomal_bL19_sf"/>
</dbReference>
<dbReference type="InterPro" id="IPR008991">
    <property type="entry name" value="Translation_prot_SH3-like_sf"/>
</dbReference>
<dbReference type="NCBIfam" id="TIGR01024">
    <property type="entry name" value="rplS_bact"/>
    <property type="match status" value="1"/>
</dbReference>
<dbReference type="PANTHER" id="PTHR15680:SF9">
    <property type="entry name" value="LARGE RIBOSOMAL SUBUNIT PROTEIN BL19M"/>
    <property type="match status" value="1"/>
</dbReference>
<dbReference type="PANTHER" id="PTHR15680">
    <property type="entry name" value="RIBOSOMAL PROTEIN L19"/>
    <property type="match status" value="1"/>
</dbReference>
<dbReference type="Pfam" id="PF01245">
    <property type="entry name" value="Ribosomal_L19"/>
    <property type="match status" value="1"/>
</dbReference>
<dbReference type="PIRSF" id="PIRSF002191">
    <property type="entry name" value="Ribosomal_L19"/>
    <property type="match status" value="1"/>
</dbReference>
<dbReference type="PRINTS" id="PR00061">
    <property type="entry name" value="RIBOSOMALL19"/>
</dbReference>
<dbReference type="SUPFAM" id="SSF50104">
    <property type="entry name" value="Translation proteins SH3-like domain"/>
    <property type="match status" value="1"/>
</dbReference>
<dbReference type="PROSITE" id="PS01015">
    <property type="entry name" value="RIBOSOMAL_L19"/>
    <property type="match status" value="1"/>
</dbReference>
<feature type="chain" id="PRO_0000163406" description="Large ribosomal subunit protein bL19">
    <location>
        <begin position="1"/>
        <end position="114"/>
    </location>
</feature>
<proteinExistence type="inferred from homology"/>
<accession>Q636I6</accession>
<protein>
    <recommendedName>
        <fullName evidence="1">Large ribosomal subunit protein bL19</fullName>
    </recommendedName>
    <alternativeName>
        <fullName evidence="2">50S ribosomal protein L19</fullName>
    </alternativeName>
</protein>
<sequence length="114" mass="13167">MQQLIAEITKGQLKTDLPSFRPGDTLRVHVKVVEGTRERIQLFEGVVIKRRGGGISETFTVRKISYGVGVERTFPVHTPRIAKIEVLRRGKVRRAKLYYLRNLRGKKARIKEIR</sequence>
<organism>
    <name type="scientific">Bacillus cereus (strain ZK / E33L)</name>
    <dbReference type="NCBI Taxonomy" id="288681"/>
    <lineage>
        <taxon>Bacteria</taxon>
        <taxon>Bacillati</taxon>
        <taxon>Bacillota</taxon>
        <taxon>Bacilli</taxon>
        <taxon>Bacillales</taxon>
        <taxon>Bacillaceae</taxon>
        <taxon>Bacillus</taxon>
        <taxon>Bacillus cereus group</taxon>
    </lineage>
</organism>
<comment type="function">
    <text evidence="1">This protein is located at the 30S-50S ribosomal subunit interface and may play a role in the structure and function of the aminoacyl-tRNA binding site.</text>
</comment>
<comment type="similarity">
    <text evidence="1">Belongs to the bacterial ribosomal protein bL19 family.</text>
</comment>
<reference key="1">
    <citation type="journal article" date="2006" name="J. Bacteriol.">
        <title>Pathogenomic sequence analysis of Bacillus cereus and Bacillus thuringiensis isolates closely related to Bacillus anthracis.</title>
        <authorList>
            <person name="Han C.S."/>
            <person name="Xie G."/>
            <person name="Challacombe J.F."/>
            <person name="Altherr M.R."/>
            <person name="Bhotika S.S."/>
            <person name="Bruce D."/>
            <person name="Campbell C.S."/>
            <person name="Campbell M.L."/>
            <person name="Chen J."/>
            <person name="Chertkov O."/>
            <person name="Cleland C."/>
            <person name="Dimitrijevic M."/>
            <person name="Doggett N.A."/>
            <person name="Fawcett J.J."/>
            <person name="Glavina T."/>
            <person name="Goodwin L.A."/>
            <person name="Hill K.K."/>
            <person name="Hitchcock P."/>
            <person name="Jackson P.J."/>
            <person name="Keim P."/>
            <person name="Kewalramani A.R."/>
            <person name="Longmire J."/>
            <person name="Lucas S."/>
            <person name="Malfatti S."/>
            <person name="McMurry K."/>
            <person name="Meincke L.J."/>
            <person name="Misra M."/>
            <person name="Moseman B.L."/>
            <person name="Mundt M."/>
            <person name="Munk A.C."/>
            <person name="Okinaka R.T."/>
            <person name="Parson-Quintana B."/>
            <person name="Reilly L.P."/>
            <person name="Richardson P."/>
            <person name="Robinson D.L."/>
            <person name="Rubin E."/>
            <person name="Saunders E."/>
            <person name="Tapia R."/>
            <person name="Tesmer J.G."/>
            <person name="Thayer N."/>
            <person name="Thompson L.S."/>
            <person name="Tice H."/>
            <person name="Ticknor L.O."/>
            <person name="Wills P.L."/>
            <person name="Brettin T.S."/>
            <person name="Gilna P."/>
        </authorList>
    </citation>
    <scope>NUCLEOTIDE SEQUENCE [LARGE SCALE GENOMIC DNA]</scope>
    <source>
        <strain>ZK / E33L</strain>
    </source>
</reference>
<evidence type="ECO:0000255" key="1">
    <source>
        <dbReference type="HAMAP-Rule" id="MF_00402"/>
    </source>
</evidence>
<evidence type="ECO:0000305" key="2"/>
<name>RL19_BACCZ</name>